<comment type="function">
    <text evidence="2">Substrate-specific adapter of a BCR (BTB-CUL3-RBX1) E3 ubiquitin ligase complex that acts as a negative regulator of Wnt signaling pathway and ER-Golgi transport. The BCR(KLHL12) complex is involved in ER-Golgi transport by regulating the size of COPII coats, thereby playing a key role in collagen export, which is required for embryonic stem (ES) cells division: BCR(KLHL12) acts by mediating monoubiquitination of SEC31 (SEC31A or SEC31B). The BCR(KLHL12) complex is also involved in neural crest specification: in response to cytosolic calcium increase, interacts with the heterodimer formed with PEF1 and PDCD6/ALG-2, leading to bridge together the BCR(KLHL12) complex and SEC31 (SEC31A or SEC31B), promoting monoubiquitination of SEC31 and subsequent collagen export. As part of the BCR(KLHL12) complex, also acts as a negative regulator of the Wnt signaling pathway by mediating ubiquitination and subsequent proteolysis of DVL3. The BCR(KLHL12) complex also mediates polyubiquitination of DRD4 and PEF1, without leading to degradation of these proteins.</text>
</comment>
<comment type="pathway">
    <text>Protein modification; protein ubiquitination.</text>
</comment>
<comment type="subunit">
    <text evidence="2">Component of the BCR(KLHL12) E3 ubiquitin ligase complex, at least composed of CUL3 and KLHL12 and RBX1. This complex interacts with DVL3 upon activation of the Wnt signaling pathway by WNT3A. Interacts with DRD4, KLHL2 and SEC31A. Interacts with PEF1 and PDCD6/ALG-2; interaction takes place in response to cytosolic calcium increase and leads to bridge together the BCR(KLHL12) complex and SEC31 (SEC31A or SEC31B).</text>
</comment>
<comment type="subcellular location">
    <subcellularLocation>
        <location evidence="2">Cytoplasmic vesicle</location>
        <location evidence="2">COPII-coated vesicle</location>
    </subcellularLocation>
</comment>
<comment type="domain">
    <text evidence="1">The BTB domain is required for interaction with CUL3.</text>
</comment>
<comment type="PTM">
    <text evidence="2">Ubiquitinated by the SCF(FBXL17) complex, leading to its degradation by the proteasome: ubiquitination by the SCF(FBXL17) complex takes place when aberrant BTB domain dimers are formed.</text>
</comment>
<feature type="chain" id="PRO_0000234351" description="Kelch-like protein 12">
    <location>
        <begin position="1"/>
        <end position="568"/>
    </location>
</feature>
<feature type="domain" description="BTB" evidence="3">
    <location>
        <begin position="33"/>
        <end position="100"/>
    </location>
</feature>
<feature type="domain" description="BACK">
    <location>
        <begin position="135"/>
        <end position="236"/>
    </location>
</feature>
<feature type="repeat" description="Kelch 1">
    <location>
        <begin position="282"/>
        <end position="329"/>
    </location>
</feature>
<feature type="repeat" description="Kelch 2">
    <location>
        <begin position="331"/>
        <end position="379"/>
    </location>
</feature>
<feature type="repeat" description="Kelch 3">
    <location>
        <begin position="380"/>
        <end position="426"/>
    </location>
</feature>
<feature type="repeat" description="Kelch 4">
    <location>
        <begin position="427"/>
        <end position="473"/>
    </location>
</feature>
<feature type="repeat" description="Kelch 5">
    <location>
        <begin position="475"/>
        <end position="520"/>
    </location>
</feature>
<feature type="repeat" description="Kelch 6">
    <location>
        <begin position="522"/>
        <end position="567"/>
    </location>
</feature>
<feature type="region of interest" description="Interaction with DVL3" evidence="1">
    <location>
        <begin position="405"/>
        <end position="568"/>
    </location>
</feature>
<feature type="sequence conflict" description="In Ref. 1; CAC79640 and 3; AAH86983." evidence="4" ref="1 3">
    <original>D</original>
    <variation>A</variation>
    <location>
        <position position="279"/>
    </location>
</feature>
<evidence type="ECO:0000250" key="1"/>
<evidence type="ECO:0000250" key="2">
    <source>
        <dbReference type="UniProtKB" id="Q53G59"/>
    </source>
</evidence>
<evidence type="ECO:0000255" key="3">
    <source>
        <dbReference type="PROSITE-ProRule" id="PRU00037"/>
    </source>
</evidence>
<evidence type="ECO:0000305" key="4"/>
<proteinExistence type="evidence at transcript level"/>
<name>KLH12_RAT</name>
<keyword id="KW-0968">Cytoplasmic vesicle</keyword>
<keyword id="KW-0931">ER-Golgi transport</keyword>
<keyword id="KW-0880">Kelch repeat</keyword>
<keyword id="KW-1185">Reference proteome</keyword>
<keyword id="KW-0677">Repeat</keyword>
<keyword id="KW-0813">Transport</keyword>
<keyword id="KW-0832">Ubl conjugation</keyword>
<keyword id="KW-0833">Ubl conjugation pathway</keyword>
<keyword id="KW-0879">Wnt signaling pathway</keyword>
<sequence length="568" mass="63306">MGGIMAPKDIMTNTHAKSILNSMNSLRKSNTLCDVTLRVEQKDFPAHRIVLAACSDYFCAMFTSELSEKGKPYVDIQGLTASTMEILLDFVYTETVHVTVENVQELLPAACLLQLKGVKQACCEFLESQLDPSNCLGIRDFAETHNCVDLMQAAEVFSQKHFPEVVQHEEFILLSQGEVEKLIKCDEIQVDSEEPVFEAVINWVKHAKKEREESLPDLLQYVRMPLLTPRYITDVIDAEPFIRCSLQCRDLVDEAKKFHLRPELRSQMQGPRTRARLGDNEVLLVVGGFGSQQSPIDVVEKYDPKTQEWSFLPSITRKRRYVASVSLHDRIYVIGGYDGRSRLSSVECLDYTADEDGVWYSVAPMNVRRGLAGATTLGDMIYVSGGFDGSRRHTSMERYDPNIDQWSMLGDMQTAREGAGLVVASGIIYCLGGYDGLNILNSVEKYDPHTGHWTNVTPMATKRSGAGVALLNDHIYVVGGFDGTAHLSSVEAYNIRTDSWTTVTSMTTPRCYVGATVLRGRLYAIAGYDGNSLLSSIECYDPIIDSWEVVASMGTQRCDAGVCVLREK</sequence>
<accession>Q8R2H4</accession>
<accession>F8WG02</accession>
<dbReference type="EMBL" id="AJ133126">
    <property type="protein sequence ID" value="CAC79640.1"/>
    <property type="molecule type" value="mRNA"/>
</dbReference>
<dbReference type="EMBL" id="BC086983">
    <property type="protein sequence ID" value="AAH86983.1"/>
    <property type="molecule type" value="mRNA"/>
</dbReference>
<dbReference type="RefSeq" id="NP_714952.1">
    <property type="nucleotide sequence ID" value="NM_153730.2"/>
</dbReference>
<dbReference type="RefSeq" id="XP_006249907.1">
    <property type="nucleotide sequence ID" value="XM_006249845.1"/>
</dbReference>
<dbReference type="RefSeq" id="XP_017454168.1">
    <property type="nucleotide sequence ID" value="XM_017598679.1"/>
</dbReference>
<dbReference type="SMR" id="Q8R2H4"/>
<dbReference type="FunCoup" id="Q8R2H4">
    <property type="interactions" value="1489"/>
</dbReference>
<dbReference type="STRING" id="10116.ENSRNOP00000005832"/>
<dbReference type="PhosphoSitePlus" id="Q8R2H4"/>
<dbReference type="PaxDb" id="10116-ENSRNOP00000005832"/>
<dbReference type="GeneID" id="266772"/>
<dbReference type="KEGG" id="rno:266772"/>
<dbReference type="UCSC" id="RGD:628717">
    <property type="organism name" value="rat"/>
</dbReference>
<dbReference type="AGR" id="RGD:628717"/>
<dbReference type="CTD" id="59349"/>
<dbReference type="RGD" id="628717">
    <property type="gene designation" value="Klhl12"/>
</dbReference>
<dbReference type="eggNOG" id="KOG4441">
    <property type="taxonomic scope" value="Eukaryota"/>
</dbReference>
<dbReference type="InParanoid" id="Q8R2H4"/>
<dbReference type="TreeFam" id="TF329218"/>
<dbReference type="Reactome" id="R-RNO-4641258">
    <property type="pathway name" value="Degradation of DVL"/>
</dbReference>
<dbReference type="UniPathway" id="UPA00143"/>
<dbReference type="PRO" id="PR:Q8R2H4"/>
<dbReference type="Proteomes" id="UP000002494">
    <property type="component" value="Unplaced"/>
</dbReference>
<dbReference type="GO" id="GO:0030127">
    <property type="term" value="C:COPII vesicle coat"/>
    <property type="evidence" value="ECO:0000250"/>
    <property type="project" value="UniProtKB"/>
</dbReference>
<dbReference type="GO" id="GO:0030134">
    <property type="term" value="C:COPII-coated ER to Golgi transport vesicle"/>
    <property type="evidence" value="ECO:0000250"/>
    <property type="project" value="UniProtKB"/>
</dbReference>
<dbReference type="GO" id="GO:0031463">
    <property type="term" value="C:Cul3-RING ubiquitin ligase complex"/>
    <property type="evidence" value="ECO:0000250"/>
    <property type="project" value="UniProtKB"/>
</dbReference>
<dbReference type="GO" id="GO:0005737">
    <property type="term" value="C:cytoplasm"/>
    <property type="evidence" value="ECO:0000318"/>
    <property type="project" value="GO_Central"/>
</dbReference>
<dbReference type="GO" id="GO:0042802">
    <property type="term" value="F:identical protein binding"/>
    <property type="evidence" value="ECO:0000266"/>
    <property type="project" value="RGD"/>
</dbReference>
<dbReference type="GO" id="GO:1990756">
    <property type="term" value="F:ubiquitin-like ligase-substrate adaptor activity"/>
    <property type="evidence" value="ECO:0000318"/>
    <property type="project" value="GO_Central"/>
</dbReference>
<dbReference type="GO" id="GO:0048208">
    <property type="term" value="P:COPII vesicle coating"/>
    <property type="evidence" value="ECO:0000250"/>
    <property type="project" value="UniProtKB"/>
</dbReference>
<dbReference type="GO" id="GO:0006888">
    <property type="term" value="P:endoplasmic reticulum to Golgi vesicle-mediated transport"/>
    <property type="evidence" value="ECO:0000250"/>
    <property type="project" value="UniProtKB"/>
</dbReference>
<dbReference type="GO" id="GO:0014032">
    <property type="term" value="P:neural crest cell development"/>
    <property type="evidence" value="ECO:0000250"/>
    <property type="project" value="UniProtKB"/>
</dbReference>
<dbReference type="GO" id="GO:0014029">
    <property type="term" value="P:neural crest formation"/>
    <property type="evidence" value="ECO:0000250"/>
    <property type="project" value="UniProtKB"/>
</dbReference>
<dbReference type="GO" id="GO:0043161">
    <property type="term" value="P:proteasome-mediated ubiquitin-dependent protein catabolic process"/>
    <property type="evidence" value="ECO:0000318"/>
    <property type="project" value="GO_Central"/>
</dbReference>
<dbReference type="GO" id="GO:0006513">
    <property type="term" value="P:protein monoubiquitination"/>
    <property type="evidence" value="ECO:0000250"/>
    <property type="project" value="UniProtKB"/>
</dbReference>
<dbReference type="GO" id="GO:0016055">
    <property type="term" value="P:Wnt signaling pathway"/>
    <property type="evidence" value="ECO:0000250"/>
    <property type="project" value="UniProtKB"/>
</dbReference>
<dbReference type="CDD" id="cd18452">
    <property type="entry name" value="BACK_KLHL12"/>
    <property type="match status" value="1"/>
</dbReference>
<dbReference type="CDD" id="cd18242">
    <property type="entry name" value="BTB_POZ_KLHL12_C3IP1_DKIR"/>
    <property type="match status" value="1"/>
</dbReference>
<dbReference type="FunFam" id="2.120.10.80:FF:000011">
    <property type="entry name" value="Kelch like family member 12"/>
    <property type="match status" value="1"/>
</dbReference>
<dbReference type="FunFam" id="1.25.40.420:FF:000001">
    <property type="entry name" value="Kelch-like family member 12"/>
    <property type="match status" value="1"/>
</dbReference>
<dbReference type="FunFam" id="3.30.710.10:FF:000001">
    <property type="entry name" value="Kelch-like family member 20"/>
    <property type="match status" value="1"/>
</dbReference>
<dbReference type="Gene3D" id="1.25.40.420">
    <property type="match status" value="1"/>
</dbReference>
<dbReference type="Gene3D" id="2.120.10.80">
    <property type="entry name" value="Kelch-type beta propeller"/>
    <property type="match status" value="1"/>
</dbReference>
<dbReference type="Gene3D" id="3.30.710.10">
    <property type="entry name" value="Potassium Channel Kv1.1, Chain A"/>
    <property type="match status" value="1"/>
</dbReference>
<dbReference type="InterPro" id="IPR011705">
    <property type="entry name" value="BACK"/>
</dbReference>
<dbReference type="InterPro" id="IPR017096">
    <property type="entry name" value="BTB-kelch_protein"/>
</dbReference>
<dbReference type="InterPro" id="IPR000210">
    <property type="entry name" value="BTB/POZ_dom"/>
</dbReference>
<dbReference type="InterPro" id="IPR015915">
    <property type="entry name" value="Kelch-typ_b-propeller"/>
</dbReference>
<dbReference type="InterPro" id="IPR006652">
    <property type="entry name" value="Kelch_1"/>
</dbReference>
<dbReference type="InterPro" id="IPR011333">
    <property type="entry name" value="SKP1/BTB/POZ_sf"/>
</dbReference>
<dbReference type="PANTHER" id="PTHR24412">
    <property type="entry name" value="KELCH PROTEIN"/>
    <property type="match status" value="1"/>
</dbReference>
<dbReference type="PANTHER" id="PTHR24412:SF494">
    <property type="entry name" value="KELCH-LIKE PROTEIN 12"/>
    <property type="match status" value="1"/>
</dbReference>
<dbReference type="Pfam" id="PF07707">
    <property type="entry name" value="BACK"/>
    <property type="match status" value="1"/>
</dbReference>
<dbReference type="Pfam" id="PF00651">
    <property type="entry name" value="BTB"/>
    <property type="match status" value="1"/>
</dbReference>
<dbReference type="Pfam" id="PF01344">
    <property type="entry name" value="Kelch_1"/>
    <property type="match status" value="2"/>
</dbReference>
<dbReference type="Pfam" id="PF24681">
    <property type="entry name" value="Kelch_KLHDC2_KLHL20_DRC7"/>
    <property type="match status" value="1"/>
</dbReference>
<dbReference type="PIRSF" id="PIRSF037037">
    <property type="entry name" value="Kelch-like_protein_gigaxonin"/>
    <property type="match status" value="1"/>
</dbReference>
<dbReference type="PRINTS" id="PR00501">
    <property type="entry name" value="KELCHREPEAT"/>
</dbReference>
<dbReference type="SMART" id="SM00875">
    <property type="entry name" value="BACK"/>
    <property type="match status" value="1"/>
</dbReference>
<dbReference type="SMART" id="SM00225">
    <property type="entry name" value="BTB"/>
    <property type="match status" value="1"/>
</dbReference>
<dbReference type="SMART" id="SM00612">
    <property type="entry name" value="Kelch"/>
    <property type="match status" value="6"/>
</dbReference>
<dbReference type="SUPFAM" id="SSF117281">
    <property type="entry name" value="Kelch motif"/>
    <property type="match status" value="1"/>
</dbReference>
<dbReference type="SUPFAM" id="SSF54695">
    <property type="entry name" value="POZ domain"/>
    <property type="match status" value="1"/>
</dbReference>
<dbReference type="PROSITE" id="PS50097">
    <property type="entry name" value="BTB"/>
    <property type="match status" value="1"/>
</dbReference>
<gene>
    <name type="primary">Klhl12</name>
    <name type="synonym">C3ip1</name>
</gene>
<organism>
    <name type="scientific">Rattus norvegicus</name>
    <name type="common">Rat</name>
    <dbReference type="NCBI Taxonomy" id="10116"/>
    <lineage>
        <taxon>Eukaryota</taxon>
        <taxon>Metazoa</taxon>
        <taxon>Chordata</taxon>
        <taxon>Craniata</taxon>
        <taxon>Vertebrata</taxon>
        <taxon>Euteleostomi</taxon>
        <taxon>Mammalia</taxon>
        <taxon>Eutheria</taxon>
        <taxon>Euarchontoglires</taxon>
        <taxon>Glires</taxon>
        <taxon>Rodentia</taxon>
        <taxon>Myomorpha</taxon>
        <taxon>Muroidea</taxon>
        <taxon>Muridae</taxon>
        <taxon>Murinae</taxon>
        <taxon>Rattus</taxon>
    </lineage>
</organism>
<reference key="1">
    <citation type="submission" date="1999-02" db="EMBL/GenBank/DDBJ databases">
        <title>Kelch-like protein.</title>
        <authorList>
            <person name="Horikawa H.P.M."/>
            <person name="Betz H."/>
        </authorList>
    </citation>
    <scope>NUCLEOTIDE SEQUENCE [MRNA]</scope>
    <source>
        <tissue>Brain</tissue>
    </source>
</reference>
<reference key="2">
    <citation type="journal article" date="2004" name="Nature">
        <title>Genome sequence of the Brown Norway rat yields insights into mammalian evolution.</title>
        <authorList>
            <person name="Gibbs R.A."/>
            <person name="Weinstock G.M."/>
            <person name="Metzker M.L."/>
            <person name="Muzny D.M."/>
            <person name="Sodergren E.J."/>
            <person name="Scherer S."/>
            <person name="Scott G."/>
            <person name="Steffen D."/>
            <person name="Worley K.C."/>
            <person name="Burch P.E."/>
            <person name="Okwuonu G."/>
            <person name="Hines S."/>
            <person name="Lewis L."/>
            <person name="Deramo C."/>
            <person name="Delgado O."/>
            <person name="Dugan-Rocha S."/>
            <person name="Miner G."/>
            <person name="Morgan M."/>
            <person name="Hawes A."/>
            <person name="Gill R."/>
            <person name="Holt R.A."/>
            <person name="Adams M.D."/>
            <person name="Amanatides P.G."/>
            <person name="Baden-Tillson H."/>
            <person name="Barnstead M."/>
            <person name="Chin S."/>
            <person name="Evans C.A."/>
            <person name="Ferriera S."/>
            <person name="Fosler C."/>
            <person name="Glodek A."/>
            <person name="Gu Z."/>
            <person name="Jennings D."/>
            <person name="Kraft C.L."/>
            <person name="Nguyen T."/>
            <person name="Pfannkoch C.M."/>
            <person name="Sitter C."/>
            <person name="Sutton G.G."/>
            <person name="Venter J.C."/>
            <person name="Woodage T."/>
            <person name="Smith D."/>
            <person name="Lee H.-M."/>
            <person name="Gustafson E."/>
            <person name="Cahill P."/>
            <person name="Kana A."/>
            <person name="Doucette-Stamm L."/>
            <person name="Weinstock K."/>
            <person name="Fechtel K."/>
            <person name="Weiss R.B."/>
            <person name="Dunn D.M."/>
            <person name="Green E.D."/>
            <person name="Blakesley R.W."/>
            <person name="Bouffard G.G."/>
            <person name="De Jong P.J."/>
            <person name="Osoegawa K."/>
            <person name="Zhu B."/>
            <person name="Marra M."/>
            <person name="Schein J."/>
            <person name="Bosdet I."/>
            <person name="Fjell C."/>
            <person name="Jones S."/>
            <person name="Krzywinski M."/>
            <person name="Mathewson C."/>
            <person name="Siddiqui A."/>
            <person name="Wye N."/>
            <person name="McPherson J."/>
            <person name="Zhao S."/>
            <person name="Fraser C.M."/>
            <person name="Shetty J."/>
            <person name="Shatsman S."/>
            <person name="Geer K."/>
            <person name="Chen Y."/>
            <person name="Abramzon S."/>
            <person name="Nierman W.C."/>
            <person name="Havlak P.H."/>
            <person name="Chen R."/>
            <person name="Durbin K.J."/>
            <person name="Egan A."/>
            <person name="Ren Y."/>
            <person name="Song X.-Z."/>
            <person name="Li B."/>
            <person name="Liu Y."/>
            <person name="Qin X."/>
            <person name="Cawley S."/>
            <person name="Cooney A.J."/>
            <person name="D'Souza L.M."/>
            <person name="Martin K."/>
            <person name="Wu J.Q."/>
            <person name="Gonzalez-Garay M.L."/>
            <person name="Jackson A.R."/>
            <person name="Kalafus K.J."/>
            <person name="McLeod M.P."/>
            <person name="Milosavljevic A."/>
            <person name="Virk D."/>
            <person name="Volkov A."/>
            <person name="Wheeler D.A."/>
            <person name="Zhang Z."/>
            <person name="Bailey J.A."/>
            <person name="Eichler E.E."/>
            <person name="Tuzun E."/>
            <person name="Birney E."/>
            <person name="Mongin E."/>
            <person name="Ureta-Vidal A."/>
            <person name="Woodwark C."/>
            <person name="Zdobnov E."/>
            <person name="Bork P."/>
            <person name="Suyama M."/>
            <person name="Torrents D."/>
            <person name="Alexandersson M."/>
            <person name="Trask B.J."/>
            <person name="Young J.M."/>
            <person name="Huang H."/>
            <person name="Wang H."/>
            <person name="Xing H."/>
            <person name="Daniels S."/>
            <person name="Gietzen D."/>
            <person name="Schmidt J."/>
            <person name="Stevens K."/>
            <person name="Vitt U."/>
            <person name="Wingrove J."/>
            <person name="Camara F."/>
            <person name="Mar Alba M."/>
            <person name="Abril J.F."/>
            <person name="Guigo R."/>
            <person name="Smit A."/>
            <person name="Dubchak I."/>
            <person name="Rubin E.M."/>
            <person name="Couronne O."/>
            <person name="Poliakov A."/>
            <person name="Huebner N."/>
            <person name="Ganten D."/>
            <person name="Goesele C."/>
            <person name="Hummel O."/>
            <person name="Kreitler T."/>
            <person name="Lee Y.-A."/>
            <person name="Monti J."/>
            <person name="Schulz H."/>
            <person name="Zimdahl H."/>
            <person name="Himmelbauer H."/>
            <person name="Lehrach H."/>
            <person name="Jacob H.J."/>
            <person name="Bromberg S."/>
            <person name="Gullings-Handley J."/>
            <person name="Jensen-Seaman M.I."/>
            <person name="Kwitek A.E."/>
            <person name="Lazar J."/>
            <person name="Pasko D."/>
            <person name="Tonellato P.J."/>
            <person name="Twigger S."/>
            <person name="Ponting C.P."/>
            <person name="Duarte J.M."/>
            <person name="Rice S."/>
            <person name="Goodstadt L."/>
            <person name="Beatson S.A."/>
            <person name="Emes R.D."/>
            <person name="Winter E.E."/>
            <person name="Webber C."/>
            <person name="Brandt P."/>
            <person name="Nyakatura G."/>
            <person name="Adetobi M."/>
            <person name="Chiaromonte F."/>
            <person name="Elnitski L."/>
            <person name="Eswara P."/>
            <person name="Hardison R.C."/>
            <person name="Hou M."/>
            <person name="Kolbe D."/>
            <person name="Makova K."/>
            <person name="Miller W."/>
            <person name="Nekrutenko A."/>
            <person name="Riemer C."/>
            <person name="Schwartz S."/>
            <person name="Taylor J."/>
            <person name="Yang S."/>
            <person name="Zhang Y."/>
            <person name="Lindpaintner K."/>
            <person name="Andrews T.D."/>
            <person name="Caccamo M."/>
            <person name="Clamp M."/>
            <person name="Clarke L."/>
            <person name="Curwen V."/>
            <person name="Durbin R.M."/>
            <person name="Eyras E."/>
            <person name="Searle S.M."/>
            <person name="Cooper G.M."/>
            <person name="Batzoglou S."/>
            <person name="Brudno M."/>
            <person name="Sidow A."/>
            <person name="Stone E.A."/>
            <person name="Payseur B.A."/>
            <person name="Bourque G."/>
            <person name="Lopez-Otin C."/>
            <person name="Puente X.S."/>
            <person name="Chakrabarti K."/>
            <person name="Chatterji S."/>
            <person name="Dewey C."/>
            <person name="Pachter L."/>
            <person name="Bray N."/>
            <person name="Yap V.B."/>
            <person name="Caspi A."/>
            <person name="Tesler G."/>
            <person name="Pevzner P.A."/>
            <person name="Haussler D."/>
            <person name="Roskin K.M."/>
            <person name="Baertsch R."/>
            <person name="Clawson H."/>
            <person name="Furey T.S."/>
            <person name="Hinrichs A.S."/>
            <person name="Karolchik D."/>
            <person name="Kent W.J."/>
            <person name="Rosenbloom K.R."/>
            <person name="Trumbower H."/>
            <person name="Weirauch M."/>
            <person name="Cooper D.N."/>
            <person name="Stenson P.D."/>
            <person name="Ma B."/>
            <person name="Brent M."/>
            <person name="Arumugam M."/>
            <person name="Shteynberg D."/>
            <person name="Copley R.R."/>
            <person name="Taylor M.S."/>
            <person name="Riethman H."/>
            <person name="Mudunuri U."/>
            <person name="Peterson J."/>
            <person name="Guyer M."/>
            <person name="Felsenfeld A."/>
            <person name="Old S."/>
            <person name="Mockrin S."/>
            <person name="Collins F.S."/>
        </authorList>
    </citation>
    <scope>NUCLEOTIDE SEQUENCE [LARGE SCALE GENOMIC DNA]</scope>
    <source>
        <strain>Brown Norway</strain>
    </source>
</reference>
<reference key="3">
    <citation type="journal article" date="2004" name="Genome Res.">
        <title>The status, quality, and expansion of the NIH full-length cDNA project: the Mammalian Gene Collection (MGC).</title>
        <authorList>
            <consortium name="The MGC Project Team"/>
        </authorList>
    </citation>
    <scope>NUCLEOTIDE SEQUENCE [LARGE SCALE MRNA]</scope>
    <source>
        <tissue>Testis</tissue>
    </source>
</reference>
<protein>
    <recommendedName>
        <fullName>Kelch-like protein 12</fullName>
    </recommendedName>
    <alternativeName>
        <fullName>CUL3-interacting protein 1</fullName>
    </alternativeName>
</protein>